<keyword id="KW-0028">Amino-acid biosynthesis</keyword>
<keyword id="KW-0067">ATP-binding</keyword>
<keyword id="KW-0963">Cytoplasm</keyword>
<keyword id="KW-0418">Kinase</keyword>
<keyword id="KW-0547">Nucleotide-binding</keyword>
<keyword id="KW-0791">Threonine biosynthesis</keyword>
<keyword id="KW-0808">Transferase</keyword>
<evidence type="ECO:0000255" key="1">
    <source>
        <dbReference type="HAMAP-Rule" id="MF_00384"/>
    </source>
</evidence>
<feature type="chain" id="PRO_1000134261" description="Homoserine kinase">
    <location>
        <begin position="1"/>
        <end position="286"/>
    </location>
</feature>
<feature type="binding site" evidence="1">
    <location>
        <begin position="78"/>
        <end position="88"/>
    </location>
    <ligand>
        <name>ATP</name>
        <dbReference type="ChEBI" id="CHEBI:30616"/>
    </ligand>
</feature>
<name>KHSE_STRE4</name>
<sequence length="286" mass="31026">MKIRVPATSANLGPGFDSMGIAVSKYLEVDILEERDQWFIEHDLGDIPNDDSNLLIQTALRLAPNIPAHRLKMTSDIPLARGLGSSSSVIVAGIELANQLGHLNLTDDRKLAIATRIEGHPDNVAPAIFGQLVIASQIGKDVDYIIAPFPDLSLVCFIPDYELKTSDSRDVLPKQLSYKQAVAASSVANLAIAALLTGNLKKAGRAIENDQFHEIYRQRLVREFQPIKRAAAANGAYATYLSGAGPAIMVMCPNKKKMAIYEAIEQLGLIGQLVSLELDRQGLCLV</sequence>
<proteinExistence type="inferred from homology"/>
<comment type="function">
    <text evidence="1">Catalyzes the ATP-dependent phosphorylation of L-homoserine to L-homoserine phosphate.</text>
</comment>
<comment type="catalytic activity">
    <reaction evidence="1">
        <text>L-homoserine + ATP = O-phospho-L-homoserine + ADP + H(+)</text>
        <dbReference type="Rhea" id="RHEA:13985"/>
        <dbReference type="ChEBI" id="CHEBI:15378"/>
        <dbReference type="ChEBI" id="CHEBI:30616"/>
        <dbReference type="ChEBI" id="CHEBI:57476"/>
        <dbReference type="ChEBI" id="CHEBI:57590"/>
        <dbReference type="ChEBI" id="CHEBI:456216"/>
        <dbReference type="EC" id="2.7.1.39"/>
    </reaction>
</comment>
<comment type="pathway">
    <text evidence="1">Amino-acid biosynthesis; L-threonine biosynthesis; L-threonine from L-aspartate: step 4/5.</text>
</comment>
<comment type="subcellular location">
    <subcellularLocation>
        <location evidence="1">Cytoplasm</location>
    </subcellularLocation>
</comment>
<comment type="similarity">
    <text evidence="1">Belongs to the GHMP kinase family. Homoserine kinase subfamily.</text>
</comment>
<accession>C0MA57</accession>
<protein>
    <recommendedName>
        <fullName evidence="1">Homoserine kinase</fullName>
        <shortName evidence="1">HK</shortName>
        <shortName evidence="1">HSK</shortName>
        <ecNumber evidence="1">2.7.1.39</ecNumber>
    </recommendedName>
</protein>
<reference key="1">
    <citation type="journal article" date="2009" name="PLoS Pathog.">
        <title>Genomic evidence for the evolution of Streptococcus equi: host restriction, increased virulence, and genetic exchange with human pathogens.</title>
        <authorList>
            <person name="Holden M.T.G."/>
            <person name="Heather Z."/>
            <person name="Paillot R."/>
            <person name="Steward K.F."/>
            <person name="Webb K."/>
            <person name="Ainslie F."/>
            <person name="Jourdan T."/>
            <person name="Bason N.C."/>
            <person name="Holroyd N.E."/>
            <person name="Mungall K."/>
            <person name="Quail M.A."/>
            <person name="Sanders M."/>
            <person name="Simmonds M."/>
            <person name="Willey D."/>
            <person name="Brooks K."/>
            <person name="Aanensen D.M."/>
            <person name="Spratt B.G."/>
            <person name="Jolley K.A."/>
            <person name="Maiden M.C.J."/>
            <person name="Kehoe M."/>
            <person name="Chanter N."/>
            <person name="Bentley S.D."/>
            <person name="Robinson C."/>
            <person name="Maskell D.J."/>
            <person name="Parkhill J."/>
            <person name="Waller A.S."/>
        </authorList>
    </citation>
    <scope>NUCLEOTIDE SEQUENCE [LARGE SCALE GENOMIC DNA]</scope>
    <source>
        <strain>4047</strain>
    </source>
</reference>
<organism>
    <name type="scientific">Streptococcus equi subsp. equi (strain 4047)</name>
    <dbReference type="NCBI Taxonomy" id="553482"/>
    <lineage>
        <taxon>Bacteria</taxon>
        <taxon>Bacillati</taxon>
        <taxon>Bacillota</taxon>
        <taxon>Bacilli</taxon>
        <taxon>Lactobacillales</taxon>
        <taxon>Streptococcaceae</taxon>
        <taxon>Streptococcus</taxon>
    </lineage>
</organism>
<dbReference type="EC" id="2.7.1.39" evidence="1"/>
<dbReference type="EMBL" id="FM204883">
    <property type="protein sequence ID" value="CAW93788.1"/>
    <property type="molecule type" value="Genomic_DNA"/>
</dbReference>
<dbReference type="RefSeq" id="WP_012679528.1">
    <property type="nucleotide sequence ID" value="NC_012471.1"/>
</dbReference>
<dbReference type="SMR" id="C0MA57"/>
<dbReference type="KEGG" id="seu:SEQ_1122"/>
<dbReference type="HOGENOM" id="CLU_041243_0_0_9"/>
<dbReference type="OrthoDB" id="9769912at2"/>
<dbReference type="UniPathway" id="UPA00050">
    <property type="reaction ID" value="UER00064"/>
</dbReference>
<dbReference type="Proteomes" id="UP000001365">
    <property type="component" value="Chromosome"/>
</dbReference>
<dbReference type="GO" id="GO:0005737">
    <property type="term" value="C:cytoplasm"/>
    <property type="evidence" value="ECO:0007669"/>
    <property type="project" value="UniProtKB-SubCell"/>
</dbReference>
<dbReference type="GO" id="GO:0005524">
    <property type="term" value="F:ATP binding"/>
    <property type="evidence" value="ECO:0007669"/>
    <property type="project" value="UniProtKB-UniRule"/>
</dbReference>
<dbReference type="GO" id="GO:0004413">
    <property type="term" value="F:homoserine kinase activity"/>
    <property type="evidence" value="ECO:0007669"/>
    <property type="project" value="UniProtKB-UniRule"/>
</dbReference>
<dbReference type="GO" id="GO:0009088">
    <property type="term" value="P:threonine biosynthetic process"/>
    <property type="evidence" value="ECO:0007669"/>
    <property type="project" value="UniProtKB-UniRule"/>
</dbReference>
<dbReference type="Gene3D" id="3.30.230.10">
    <property type="match status" value="1"/>
</dbReference>
<dbReference type="Gene3D" id="3.30.70.890">
    <property type="entry name" value="GHMP kinase, C-terminal domain"/>
    <property type="match status" value="1"/>
</dbReference>
<dbReference type="HAMAP" id="MF_00384">
    <property type="entry name" value="Homoser_kinase"/>
    <property type="match status" value="1"/>
</dbReference>
<dbReference type="InterPro" id="IPR013750">
    <property type="entry name" value="GHMP_kinase_C_dom"/>
</dbReference>
<dbReference type="InterPro" id="IPR036554">
    <property type="entry name" value="GHMP_kinase_C_sf"/>
</dbReference>
<dbReference type="InterPro" id="IPR006204">
    <property type="entry name" value="GHMP_kinase_N_dom"/>
</dbReference>
<dbReference type="InterPro" id="IPR006203">
    <property type="entry name" value="GHMP_knse_ATP-bd_CS"/>
</dbReference>
<dbReference type="InterPro" id="IPR000870">
    <property type="entry name" value="Homoserine_kinase"/>
</dbReference>
<dbReference type="InterPro" id="IPR020568">
    <property type="entry name" value="Ribosomal_Su5_D2-typ_SF"/>
</dbReference>
<dbReference type="InterPro" id="IPR014721">
    <property type="entry name" value="Ribsml_uS5_D2-typ_fold_subgr"/>
</dbReference>
<dbReference type="NCBIfam" id="TIGR00191">
    <property type="entry name" value="thrB"/>
    <property type="match status" value="1"/>
</dbReference>
<dbReference type="PANTHER" id="PTHR20861:SF1">
    <property type="entry name" value="HOMOSERINE KINASE"/>
    <property type="match status" value="1"/>
</dbReference>
<dbReference type="PANTHER" id="PTHR20861">
    <property type="entry name" value="HOMOSERINE/4-DIPHOSPHOCYTIDYL-2-C-METHYL-D-ERYTHRITOL KINASE"/>
    <property type="match status" value="1"/>
</dbReference>
<dbReference type="Pfam" id="PF08544">
    <property type="entry name" value="GHMP_kinases_C"/>
    <property type="match status" value="1"/>
</dbReference>
<dbReference type="Pfam" id="PF00288">
    <property type="entry name" value="GHMP_kinases_N"/>
    <property type="match status" value="1"/>
</dbReference>
<dbReference type="PIRSF" id="PIRSF000676">
    <property type="entry name" value="Homoser_kin"/>
    <property type="match status" value="1"/>
</dbReference>
<dbReference type="PRINTS" id="PR00958">
    <property type="entry name" value="HOMSERKINASE"/>
</dbReference>
<dbReference type="SUPFAM" id="SSF55060">
    <property type="entry name" value="GHMP Kinase, C-terminal domain"/>
    <property type="match status" value="1"/>
</dbReference>
<dbReference type="SUPFAM" id="SSF54211">
    <property type="entry name" value="Ribosomal protein S5 domain 2-like"/>
    <property type="match status" value="1"/>
</dbReference>
<dbReference type="PROSITE" id="PS00627">
    <property type="entry name" value="GHMP_KINASES_ATP"/>
    <property type="match status" value="1"/>
</dbReference>
<gene>
    <name evidence="1" type="primary">thrB</name>
    <name type="ordered locus">SEQ_1122</name>
</gene>